<accession>B2S487</accession>
<feature type="chain" id="PRO_1000127423" description="Large ribosomal subunit protein bL35">
    <location>
        <begin position="1"/>
        <end position="66"/>
    </location>
</feature>
<reference key="1">
    <citation type="journal article" date="2008" name="BMC Microbiol.">
        <title>Complete genome sequence of Treponema pallidum ssp. pallidum strain SS14 determined with oligonucleotide arrays.</title>
        <authorList>
            <person name="Matejkova P."/>
            <person name="Strouhal M."/>
            <person name="Smajs D."/>
            <person name="Norris S.J."/>
            <person name="Palzkill T."/>
            <person name="Petrosino J.F."/>
            <person name="Sodergren E."/>
            <person name="Norton J.E."/>
            <person name="Singh J."/>
            <person name="Richmond T.A."/>
            <person name="Molla M.N."/>
            <person name="Albert T.J."/>
            <person name="Weinstock G.M."/>
        </authorList>
    </citation>
    <scope>NUCLEOTIDE SEQUENCE [LARGE SCALE GENOMIC DNA]</scope>
    <source>
        <strain>SS14</strain>
    </source>
</reference>
<gene>
    <name evidence="1" type="primary">rpmI</name>
    <name type="ordered locus">TPASS_0849</name>
</gene>
<keyword id="KW-0687">Ribonucleoprotein</keyword>
<keyword id="KW-0689">Ribosomal protein</keyword>
<dbReference type="EMBL" id="CP000805">
    <property type="protein sequence ID" value="ACD71266.1"/>
    <property type="molecule type" value="Genomic_DNA"/>
</dbReference>
<dbReference type="RefSeq" id="WP_010882293.1">
    <property type="nucleotide sequence ID" value="NC_021508.1"/>
</dbReference>
<dbReference type="SMR" id="B2S487"/>
<dbReference type="GeneID" id="93876607"/>
<dbReference type="KEGG" id="tpp:TPASS_0849"/>
<dbReference type="PATRIC" id="fig|455434.6.peg.838"/>
<dbReference type="Proteomes" id="UP000001202">
    <property type="component" value="Chromosome"/>
</dbReference>
<dbReference type="GO" id="GO:0022625">
    <property type="term" value="C:cytosolic large ribosomal subunit"/>
    <property type="evidence" value="ECO:0007669"/>
    <property type="project" value="TreeGrafter"/>
</dbReference>
<dbReference type="GO" id="GO:0003735">
    <property type="term" value="F:structural constituent of ribosome"/>
    <property type="evidence" value="ECO:0007669"/>
    <property type="project" value="InterPro"/>
</dbReference>
<dbReference type="GO" id="GO:0006412">
    <property type="term" value="P:translation"/>
    <property type="evidence" value="ECO:0007669"/>
    <property type="project" value="UniProtKB-UniRule"/>
</dbReference>
<dbReference type="FunFam" id="4.10.410.60:FF:000001">
    <property type="entry name" value="50S ribosomal protein L35"/>
    <property type="match status" value="1"/>
</dbReference>
<dbReference type="Gene3D" id="4.10.410.60">
    <property type="match status" value="1"/>
</dbReference>
<dbReference type="HAMAP" id="MF_00514">
    <property type="entry name" value="Ribosomal_bL35"/>
    <property type="match status" value="1"/>
</dbReference>
<dbReference type="InterPro" id="IPR001706">
    <property type="entry name" value="Ribosomal_bL35"/>
</dbReference>
<dbReference type="InterPro" id="IPR021137">
    <property type="entry name" value="Ribosomal_bL35-like"/>
</dbReference>
<dbReference type="InterPro" id="IPR018265">
    <property type="entry name" value="Ribosomal_bL35_CS"/>
</dbReference>
<dbReference type="InterPro" id="IPR037229">
    <property type="entry name" value="Ribosomal_bL35_sf"/>
</dbReference>
<dbReference type="NCBIfam" id="TIGR00001">
    <property type="entry name" value="rpmI_bact"/>
    <property type="match status" value="1"/>
</dbReference>
<dbReference type="PANTHER" id="PTHR33343">
    <property type="entry name" value="54S RIBOSOMAL PROTEIN BL35M"/>
    <property type="match status" value="1"/>
</dbReference>
<dbReference type="PANTHER" id="PTHR33343:SF1">
    <property type="entry name" value="LARGE RIBOSOMAL SUBUNIT PROTEIN BL35M"/>
    <property type="match status" value="1"/>
</dbReference>
<dbReference type="Pfam" id="PF01632">
    <property type="entry name" value="Ribosomal_L35p"/>
    <property type="match status" value="1"/>
</dbReference>
<dbReference type="PRINTS" id="PR00064">
    <property type="entry name" value="RIBOSOMALL35"/>
</dbReference>
<dbReference type="SUPFAM" id="SSF143034">
    <property type="entry name" value="L35p-like"/>
    <property type="match status" value="1"/>
</dbReference>
<dbReference type="PROSITE" id="PS00936">
    <property type="entry name" value="RIBOSOMAL_L35"/>
    <property type="match status" value="1"/>
</dbReference>
<organism>
    <name type="scientific">Treponema pallidum subsp. pallidum (strain SS14)</name>
    <dbReference type="NCBI Taxonomy" id="455434"/>
    <lineage>
        <taxon>Bacteria</taxon>
        <taxon>Pseudomonadati</taxon>
        <taxon>Spirochaetota</taxon>
        <taxon>Spirochaetia</taxon>
        <taxon>Spirochaetales</taxon>
        <taxon>Treponemataceae</taxon>
        <taxon>Treponema</taxon>
    </lineage>
</organism>
<sequence>MAKMKTKSAAAKRFSVTGAGKVKFKKMNLRHILTKKAPKRKRKLRHAGFLSKVELKVVKRKLLPYA</sequence>
<name>RL35_TREPS</name>
<comment type="similarity">
    <text evidence="1">Belongs to the bacterial ribosomal protein bL35 family.</text>
</comment>
<protein>
    <recommendedName>
        <fullName evidence="1">Large ribosomal subunit protein bL35</fullName>
    </recommendedName>
    <alternativeName>
        <fullName evidence="2">50S ribosomal protein L35</fullName>
    </alternativeName>
</protein>
<evidence type="ECO:0000255" key="1">
    <source>
        <dbReference type="HAMAP-Rule" id="MF_00514"/>
    </source>
</evidence>
<evidence type="ECO:0000305" key="2"/>
<proteinExistence type="inferred from homology"/>